<feature type="chain" id="PRO_0000375906" description="Uncharacterized protein YfjT">
    <location>
        <begin position="1"/>
        <end position="61"/>
    </location>
</feature>
<feature type="coiled-coil region" evidence="1">
    <location>
        <begin position="34"/>
        <end position="61"/>
    </location>
</feature>
<proteinExistence type="predicted"/>
<gene>
    <name type="primary">yfjT</name>
    <name type="ordered locus">BSU07970</name>
</gene>
<organism>
    <name type="scientific">Bacillus subtilis (strain 168)</name>
    <dbReference type="NCBI Taxonomy" id="224308"/>
    <lineage>
        <taxon>Bacteria</taxon>
        <taxon>Bacillati</taxon>
        <taxon>Bacillota</taxon>
        <taxon>Bacilli</taxon>
        <taxon>Bacillales</taxon>
        <taxon>Bacillaceae</taxon>
        <taxon>Bacillus</taxon>
    </lineage>
</organism>
<protein>
    <recommendedName>
        <fullName>Uncharacterized protein YfjT</fullName>
    </recommendedName>
</protein>
<name>YFJT_BACSU</name>
<sequence>MGNAVNNKDQQIDYLKNRLDMFMNVIDSLDPEATDVEDIDRLISMLDDLEAKYERFKKDWE</sequence>
<evidence type="ECO:0000255" key="1"/>
<accession>O35041</accession>
<accession>Q79EY7</accession>
<dbReference type="EMBL" id="D83967">
    <property type="protein sequence ID" value="BAA23390.1"/>
    <property type="molecule type" value="Genomic_DNA"/>
</dbReference>
<dbReference type="EMBL" id="AL009126">
    <property type="protein sequence ID" value="CAB12626.1"/>
    <property type="molecule type" value="Genomic_DNA"/>
</dbReference>
<dbReference type="PIR" id="C69807">
    <property type="entry name" value="C69807"/>
</dbReference>
<dbReference type="RefSeq" id="NP_388678.1">
    <property type="nucleotide sequence ID" value="NC_000964.3"/>
</dbReference>
<dbReference type="RefSeq" id="WP_003223132.1">
    <property type="nucleotide sequence ID" value="NZ_OZ025638.1"/>
</dbReference>
<dbReference type="SMR" id="O35041"/>
<dbReference type="FunCoup" id="O35041">
    <property type="interactions" value="64"/>
</dbReference>
<dbReference type="STRING" id="224308.BSU07970"/>
<dbReference type="PaxDb" id="224308-BSU07970"/>
<dbReference type="EnsemblBacteria" id="CAB12626">
    <property type="protein sequence ID" value="CAB12626"/>
    <property type="gene ID" value="BSU_07970"/>
</dbReference>
<dbReference type="GeneID" id="939694"/>
<dbReference type="KEGG" id="bsu:BSU07970"/>
<dbReference type="PATRIC" id="fig|224308.179.peg.862"/>
<dbReference type="eggNOG" id="ENOG5033H3W">
    <property type="taxonomic scope" value="Bacteria"/>
</dbReference>
<dbReference type="InParanoid" id="O35041"/>
<dbReference type="OrthoDB" id="2990422at2"/>
<dbReference type="BioCyc" id="BSUB:BSU07970-MONOMER"/>
<dbReference type="PRO" id="PR:O35041"/>
<dbReference type="Proteomes" id="UP000001570">
    <property type="component" value="Chromosome"/>
</dbReference>
<dbReference type="InterPro" id="IPR047670">
    <property type="entry name" value="YfjT-like"/>
</dbReference>
<dbReference type="NCBIfam" id="NF040878">
    <property type="entry name" value="SE1561_fam"/>
    <property type="match status" value="1"/>
</dbReference>
<keyword id="KW-0175">Coiled coil</keyword>
<keyword id="KW-1185">Reference proteome</keyword>
<reference key="1">
    <citation type="journal article" date="1996" name="Microbiology">
        <title>Cloning and sequencing of a 40.6 kb segment in the 73 degrees-76 degrees region of the Bacillus subtilis chromosome containing genes for trehalose metabolism and acetoin utilization.</title>
        <authorList>
            <person name="Yamamoto H."/>
            <person name="Uchiyama S."/>
            <person name="Sekiguchi J."/>
        </authorList>
    </citation>
    <scope>NUCLEOTIDE SEQUENCE [GENOMIC DNA]</scope>
    <source>
        <strain>168 / AC327</strain>
    </source>
</reference>
<reference key="2">
    <citation type="journal article" date="1997" name="Nature">
        <title>The complete genome sequence of the Gram-positive bacterium Bacillus subtilis.</title>
        <authorList>
            <person name="Kunst F."/>
            <person name="Ogasawara N."/>
            <person name="Moszer I."/>
            <person name="Albertini A.M."/>
            <person name="Alloni G."/>
            <person name="Azevedo V."/>
            <person name="Bertero M.G."/>
            <person name="Bessieres P."/>
            <person name="Bolotin A."/>
            <person name="Borchert S."/>
            <person name="Borriss R."/>
            <person name="Boursier L."/>
            <person name="Brans A."/>
            <person name="Braun M."/>
            <person name="Brignell S.C."/>
            <person name="Bron S."/>
            <person name="Brouillet S."/>
            <person name="Bruschi C.V."/>
            <person name="Caldwell B."/>
            <person name="Capuano V."/>
            <person name="Carter N.M."/>
            <person name="Choi S.-K."/>
            <person name="Codani J.-J."/>
            <person name="Connerton I.F."/>
            <person name="Cummings N.J."/>
            <person name="Daniel R.A."/>
            <person name="Denizot F."/>
            <person name="Devine K.M."/>
            <person name="Duesterhoeft A."/>
            <person name="Ehrlich S.D."/>
            <person name="Emmerson P.T."/>
            <person name="Entian K.-D."/>
            <person name="Errington J."/>
            <person name="Fabret C."/>
            <person name="Ferrari E."/>
            <person name="Foulger D."/>
            <person name="Fritz C."/>
            <person name="Fujita M."/>
            <person name="Fujita Y."/>
            <person name="Fuma S."/>
            <person name="Galizzi A."/>
            <person name="Galleron N."/>
            <person name="Ghim S.-Y."/>
            <person name="Glaser P."/>
            <person name="Goffeau A."/>
            <person name="Golightly E.J."/>
            <person name="Grandi G."/>
            <person name="Guiseppi G."/>
            <person name="Guy B.J."/>
            <person name="Haga K."/>
            <person name="Haiech J."/>
            <person name="Harwood C.R."/>
            <person name="Henaut A."/>
            <person name="Hilbert H."/>
            <person name="Holsappel S."/>
            <person name="Hosono S."/>
            <person name="Hullo M.-F."/>
            <person name="Itaya M."/>
            <person name="Jones L.-M."/>
            <person name="Joris B."/>
            <person name="Karamata D."/>
            <person name="Kasahara Y."/>
            <person name="Klaerr-Blanchard M."/>
            <person name="Klein C."/>
            <person name="Kobayashi Y."/>
            <person name="Koetter P."/>
            <person name="Koningstein G."/>
            <person name="Krogh S."/>
            <person name="Kumano M."/>
            <person name="Kurita K."/>
            <person name="Lapidus A."/>
            <person name="Lardinois S."/>
            <person name="Lauber J."/>
            <person name="Lazarevic V."/>
            <person name="Lee S.-M."/>
            <person name="Levine A."/>
            <person name="Liu H."/>
            <person name="Masuda S."/>
            <person name="Mauel C."/>
            <person name="Medigue C."/>
            <person name="Medina N."/>
            <person name="Mellado R.P."/>
            <person name="Mizuno M."/>
            <person name="Moestl D."/>
            <person name="Nakai S."/>
            <person name="Noback M."/>
            <person name="Noone D."/>
            <person name="O'Reilly M."/>
            <person name="Ogawa K."/>
            <person name="Ogiwara A."/>
            <person name="Oudega B."/>
            <person name="Park S.-H."/>
            <person name="Parro V."/>
            <person name="Pohl T.M."/>
            <person name="Portetelle D."/>
            <person name="Porwollik S."/>
            <person name="Prescott A.M."/>
            <person name="Presecan E."/>
            <person name="Pujic P."/>
            <person name="Purnelle B."/>
            <person name="Rapoport G."/>
            <person name="Rey M."/>
            <person name="Reynolds S."/>
            <person name="Rieger M."/>
            <person name="Rivolta C."/>
            <person name="Rocha E."/>
            <person name="Roche B."/>
            <person name="Rose M."/>
            <person name="Sadaie Y."/>
            <person name="Sato T."/>
            <person name="Scanlan E."/>
            <person name="Schleich S."/>
            <person name="Schroeter R."/>
            <person name="Scoffone F."/>
            <person name="Sekiguchi J."/>
            <person name="Sekowska A."/>
            <person name="Seror S.J."/>
            <person name="Serror P."/>
            <person name="Shin B.-S."/>
            <person name="Soldo B."/>
            <person name="Sorokin A."/>
            <person name="Tacconi E."/>
            <person name="Takagi T."/>
            <person name="Takahashi H."/>
            <person name="Takemaru K."/>
            <person name="Takeuchi M."/>
            <person name="Tamakoshi A."/>
            <person name="Tanaka T."/>
            <person name="Terpstra P."/>
            <person name="Tognoni A."/>
            <person name="Tosato V."/>
            <person name="Uchiyama S."/>
            <person name="Vandenbol M."/>
            <person name="Vannier F."/>
            <person name="Vassarotti A."/>
            <person name="Viari A."/>
            <person name="Wambutt R."/>
            <person name="Wedler E."/>
            <person name="Wedler H."/>
            <person name="Weitzenegger T."/>
            <person name="Winters P."/>
            <person name="Wipat A."/>
            <person name="Yamamoto H."/>
            <person name="Yamane K."/>
            <person name="Yasumoto K."/>
            <person name="Yata K."/>
            <person name="Yoshida K."/>
            <person name="Yoshikawa H.-F."/>
            <person name="Zumstein E."/>
            <person name="Yoshikawa H."/>
            <person name="Danchin A."/>
        </authorList>
    </citation>
    <scope>NUCLEOTIDE SEQUENCE [LARGE SCALE GENOMIC DNA]</scope>
    <source>
        <strain>168</strain>
    </source>
</reference>